<comment type="function">
    <text evidence="1">Binds to the 23S rRNA.</text>
</comment>
<comment type="subunit">
    <text evidence="1">Part of the 50S ribosomal subunit.</text>
</comment>
<comment type="similarity">
    <text evidence="1">Belongs to the universal ribosomal protein uL15 family.</text>
</comment>
<feature type="chain" id="PRO_1000214697" description="Large ribosomal subunit protein uL15">
    <location>
        <begin position="1"/>
        <end position="149"/>
    </location>
</feature>
<feature type="region of interest" description="Disordered" evidence="2">
    <location>
        <begin position="1"/>
        <end position="55"/>
    </location>
</feature>
<feature type="compositionally biased region" description="Basic and acidic residues" evidence="2">
    <location>
        <begin position="1"/>
        <end position="12"/>
    </location>
</feature>
<evidence type="ECO:0000255" key="1">
    <source>
        <dbReference type="HAMAP-Rule" id="MF_01341"/>
    </source>
</evidence>
<evidence type="ECO:0000256" key="2">
    <source>
        <dbReference type="SAM" id="MobiDB-lite"/>
    </source>
</evidence>
<evidence type="ECO:0000305" key="3"/>
<sequence>MSEPIKLHDLRPAKGANKPKTRVGRGEASKGKTAGRGTKGTKARKQVSAAFEGGQMPIHMRLPKLKGFKNPNKVTYQVVNVADLQKHFENGGNVTIADLVSAGLVRAKQPVKVLGDGEITASVNITATKFSASAKQKIEAAGGSVTETK</sequence>
<protein>
    <recommendedName>
        <fullName evidence="1">Large ribosomal subunit protein uL15</fullName>
    </recommendedName>
    <alternativeName>
        <fullName evidence="3">50S ribosomal protein L15</fullName>
    </alternativeName>
</protein>
<proteinExistence type="inferred from homology"/>
<gene>
    <name evidence="1" type="primary">rplO</name>
    <name type="ordered locus">ckrop_1791</name>
</gene>
<dbReference type="EMBL" id="CP001620">
    <property type="protein sequence ID" value="ACR18512.1"/>
    <property type="molecule type" value="Genomic_DNA"/>
</dbReference>
<dbReference type="RefSeq" id="WP_012732399.1">
    <property type="nucleotide sequence ID" value="NC_012704.1"/>
</dbReference>
<dbReference type="SMR" id="C4LL07"/>
<dbReference type="STRING" id="645127.ckrop_1791"/>
<dbReference type="KEGG" id="ckp:ckrop_1791"/>
<dbReference type="eggNOG" id="COG0200">
    <property type="taxonomic scope" value="Bacteria"/>
</dbReference>
<dbReference type="HOGENOM" id="CLU_055188_4_1_11"/>
<dbReference type="OrthoDB" id="9810293at2"/>
<dbReference type="Proteomes" id="UP000001473">
    <property type="component" value="Chromosome"/>
</dbReference>
<dbReference type="GO" id="GO:0022625">
    <property type="term" value="C:cytosolic large ribosomal subunit"/>
    <property type="evidence" value="ECO:0007669"/>
    <property type="project" value="TreeGrafter"/>
</dbReference>
<dbReference type="GO" id="GO:0019843">
    <property type="term" value="F:rRNA binding"/>
    <property type="evidence" value="ECO:0007669"/>
    <property type="project" value="UniProtKB-UniRule"/>
</dbReference>
<dbReference type="GO" id="GO:0003735">
    <property type="term" value="F:structural constituent of ribosome"/>
    <property type="evidence" value="ECO:0007669"/>
    <property type="project" value="InterPro"/>
</dbReference>
<dbReference type="GO" id="GO:0006412">
    <property type="term" value="P:translation"/>
    <property type="evidence" value="ECO:0007669"/>
    <property type="project" value="UniProtKB-UniRule"/>
</dbReference>
<dbReference type="FunFam" id="3.100.10.10:FF:000005">
    <property type="entry name" value="50S ribosomal protein L15"/>
    <property type="match status" value="1"/>
</dbReference>
<dbReference type="Gene3D" id="3.100.10.10">
    <property type="match status" value="1"/>
</dbReference>
<dbReference type="HAMAP" id="MF_01341">
    <property type="entry name" value="Ribosomal_uL15"/>
    <property type="match status" value="1"/>
</dbReference>
<dbReference type="InterPro" id="IPR030878">
    <property type="entry name" value="Ribosomal_uL15"/>
</dbReference>
<dbReference type="InterPro" id="IPR021131">
    <property type="entry name" value="Ribosomal_uL15/eL18"/>
</dbReference>
<dbReference type="InterPro" id="IPR036227">
    <property type="entry name" value="Ribosomal_uL15/eL18_sf"/>
</dbReference>
<dbReference type="InterPro" id="IPR005749">
    <property type="entry name" value="Ribosomal_uL15_bac-type"/>
</dbReference>
<dbReference type="InterPro" id="IPR001196">
    <property type="entry name" value="Ribosomal_uL15_CS"/>
</dbReference>
<dbReference type="NCBIfam" id="TIGR01071">
    <property type="entry name" value="rplO_bact"/>
    <property type="match status" value="1"/>
</dbReference>
<dbReference type="PANTHER" id="PTHR12934">
    <property type="entry name" value="50S RIBOSOMAL PROTEIN L15"/>
    <property type="match status" value="1"/>
</dbReference>
<dbReference type="PANTHER" id="PTHR12934:SF11">
    <property type="entry name" value="LARGE RIBOSOMAL SUBUNIT PROTEIN UL15M"/>
    <property type="match status" value="1"/>
</dbReference>
<dbReference type="Pfam" id="PF00828">
    <property type="entry name" value="Ribosomal_L27A"/>
    <property type="match status" value="1"/>
</dbReference>
<dbReference type="SUPFAM" id="SSF52080">
    <property type="entry name" value="Ribosomal proteins L15p and L18e"/>
    <property type="match status" value="1"/>
</dbReference>
<dbReference type="PROSITE" id="PS00475">
    <property type="entry name" value="RIBOSOMAL_L15"/>
    <property type="match status" value="1"/>
</dbReference>
<accession>C4LL07</accession>
<name>RL15_CORK4</name>
<keyword id="KW-1185">Reference proteome</keyword>
<keyword id="KW-0687">Ribonucleoprotein</keyword>
<keyword id="KW-0689">Ribosomal protein</keyword>
<keyword id="KW-0694">RNA-binding</keyword>
<keyword id="KW-0699">rRNA-binding</keyword>
<organism>
    <name type="scientific">Corynebacterium kroppenstedtii (strain DSM 44385 / JCM 11950 / CIP 105744 / CCUG 35717)</name>
    <dbReference type="NCBI Taxonomy" id="645127"/>
    <lineage>
        <taxon>Bacteria</taxon>
        <taxon>Bacillati</taxon>
        <taxon>Actinomycetota</taxon>
        <taxon>Actinomycetes</taxon>
        <taxon>Mycobacteriales</taxon>
        <taxon>Corynebacteriaceae</taxon>
        <taxon>Corynebacterium</taxon>
    </lineage>
</organism>
<reference key="1">
    <citation type="journal article" date="2008" name="J. Biotechnol.">
        <title>Ultrafast pyrosequencing of Corynebacterium kroppenstedtii DSM44385 revealed insights into the physiology of a lipophilic corynebacterium that lacks mycolic acids.</title>
        <authorList>
            <person name="Tauch A."/>
            <person name="Schneider J."/>
            <person name="Szczepanowski R."/>
            <person name="Tilker A."/>
            <person name="Viehoever P."/>
            <person name="Gartemann K.-H."/>
            <person name="Arnold W."/>
            <person name="Blom J."/>
            <person name="Brinkrolf K."/>
            <person name="Brune I."/>
            <person name="Goetker S."/>
            <person name="Weisshaar B."/>
            <person name="Goesmann A."/>
            <person name="Droege M."/>
            <person name="Puehler A."/>
        </authorList>
    </citation>
    <scope>NUCLEOTIDE SEQUENCE [LARGE SCALE GENOMIC DNA]</scope>
    <source>
        <strain>DSM 44385 / JCM 11950 / CIP 105744 / CCUG 35717</strain>
    </source>
</reference>